<dbReference type="EMBL" id="AE017220">
    <property type="protein sequence ID" value="AAX67184.1"/>
    <property type="molecule type" value="Genomic_DNA"/>
</dbReference>
<dbReference type="RefSeq" id="WP_000382926.1">
    <property type="nucleotide sequence ID" value="NC_006905.1"/>
</dbReference>
<dbReference type="SMR" id="Q57JC8"/>
<dbReference type="KEGG" id="sec:SCH_3278"/>
<dbReference type="HOGENOM" id="CLU_017584_9_1_6"/>
<dbReference type="Proteomes" id="UP000000538">
    <property type="component" value="Chromosome"/>
</dbReference>
<dbReference type="GO" id="GO:0003677">
    <property type="term" value="F:DNA binding"/>
    <property type="evidence" value="ECO:0007669"/>
    <property type="project" value="UniProtKB-KW"/>
</dbReference>
<dbReference type="GO" id="GO:0003700">
    <property type="term" value="F:DNA-binding transcription factor activity"/>
    <property type="evidence" value="ECO:0007669"/>
    <property type="project" value="UniProtKB-UniRule"/>
</dbReference>
<dbReference type="GO" id="GO:0045892">
    <property type="term" value="P:negative regulation of DNA-templated transcription"/>
    <property type="evidence" value="ECO:0007669"/>
    <property type="project" value="UniProtKB-UniRule"/>
</dbReference>
<dbReference type="CDD" id="cd07377">
    <property type="entry name" value="WHTH_GntR"/>
    <property type="match status" value="1"/>
</dbReference>
<dbReference type="FunFam" id="1.10.10.10:FF:000150">
    <property type="entry name" value="HTH-type transcriptional repressor NanR"/>
    <property type="match status" value="1"/>
</dbReference>
<dbReference type="Gene3D" id="1.20.120.530">
    <property type="entry name" value="GntR ligand-binding domain-like"/>
    <property type="match status" value="1"/>
</dbReference>
<dbReference type="Gene3D" id="1.10.10.10">
    <property type="entry name" value="Winged helix-like DNA-binding domain superfamily/Winged helix DNA-binding domain"/>
    <property type="match status" value="1"/>
</dbReference>
<dbReference type="HAMAP" id="MF_01236">
    <property type="entry name" value="HTH_NanR"/>
    <property type="match status" value="1"/>
</dbReference>
<dbReference type="InterPro" id="IPR011711">
    <property type="entry name" value="GntR_C"/>
</dbReference>
<dbReference type="InterPro" id="IPR008920">
    <property type="entry name" value="TF_FadR/GntR_C"/>
</dbReference>
<dbReference type="InterPro" id="IPR000524">
    <property type="entry name" value="Tscrpt_reg_HTH_GntR"/>
</dbReference>
<dbReference type="InterPro" id="IPR023730">
    <property type="entry name" value="Tscrpt_reg_NanR"/>
</dbReference>
<dbReference type="InterPro" id="IPR036388">
    <property type="entry name" value="WH-like_DNA-bd_sf"/>
</dbReference>
<dbReference type="InterPro" id="IPR036390">
    <property type="entry name" value="WH_DNA-bd_sf"/>
</dbReference>
<dbReference type="NCBIfam" id="NF003011">
    <property type="entry name" value="PRK03837.1"/>
    <property type="match status" value="1"/>
</dbReference>
<dbReference type="PANTHER" id="PTHR43537:SF53">
    <property type="entry name" value="HTH-TYPE TRANSCRIPTIONAL REPRESSOR NANR"/>
    <property type="match status" value="1"/>
</dbReference>
<dbReference type="PANTHER" id="PTHR43537">
    <property type="entry name" value="TRANSCRIPTIONAL REGULATOR, GNTR FAMILY"/>
    <property type="match status" value="1"/>
</dbReference>
<dbReference type="Pfam" id="PF07729">
    <property type="entry name" value="FCD"/>
    <property type="match status" value="1"/>
</dbReference>
<dbReference type="Pfam" id="PF00392">
    <property type="entry name" value="GntR"/>
    <property type="match status" value="1"/>
</dbReference>
<dbReference type="PRINTS" id="PR00035">
    <property type="entry name" value="HTHGNTR"/>
</dbReference>
<dbReference type="SMART" id="SM00895">
    <property type="entry name" value="FCD"/>
    <property type="match status" value="1"/>
</dbReference>
<dbReference type="SMART" id="SM00345">
    <property type="entry name" value="HTH_GNTR"/>
    <property type="match status" value="1"/>
</dbReference>
<dbReference type="SUPFAM" id="SSF48008">
    <property type="entry name" value="GntR ligand-binding domain-like"/>
    <property type="match status" value="1"/>
</dbReference>
<dbReference type="SUPFAM" id="SSF46785">
    <property type="entry name" value="Winged helix' DNA-binding domain"/>
    <property type="match status" value="1"/>
</dbReference>
<dbReference type="PROSITE" id="PS50949">
    <property type="entry name" value="HTH_GNTR"/>
    <property type="match status" value="1"/>
</dbReference>
<evidence type="ECO:0000255" key="1">
    <source>
        <dbReference type="HAMAP-Rule" id="MF_01236"/>
    </source>
</evidence>
<evidence type="ECO:0000256" key="2">
    <source>
        <dbReference type="SAM" id="MobiDB-lite"/>
    </source>
</evidence>
<comment type="function">
    <text evidence="1">Transcriptional repressor that controls expression of the genes required for the catabolism of sialic acids.</text>
</comment>
<comment type="similarity">
    <text evidence="1">Belongs to the NanR family.</text>
</comment>
<keyword id="KW-0238">DNA-binding</keyword>
<keyword id="KW-0678">Repressor</keyword>
<keyword id="KW-0804">Transcription</keyword>
<keyword id="KW-0805">Transcription regulation</keyword>
<sequence>MDVMNAFDSQAEDSPTSLGRSLRRRPLARKKLSEMVEEELEQMIRRHEFGEGEQLPSERELMAFFNVGRPSVREALAALKRKGLVQINNGERARVSRPSADTIISELSGMAKDFLTHPGGIAHFEQLRLFFESSLVRYAAEHATDEQIALLTKALEINSQSLDDNALFIRSDVEFHRVLAEIPGNPIFMAIHVALLDWLIAARPSVPDRELHEHNNVSYQQHIVIVDAIRQRDPDKADRALQTHLNSVSATWHALGKKSQKMR</sequence>
<protein>
    <recommendedName>
        <fullName evidence="1">HTH-type transcriptional repressor NanR</fullName>
    </recommendedName>
</protein>
<feature type="chain" id="PRO_0000301525" description="HTH-type transcriptional repressor NanR">
    <location>
        <begin position="1"/>
        <end position="263"/>
    </location>
</feature>
<feature type="domain" description="HTH gntR-type" evidence="1">
    <location>
        <begin position="30"/>
        <end position="98"/>
    </location>
</feature>
<feature type="DNA-binding region" description="H-T-H motif" evidence="1">
    <location>
        <begin position="58"/>
        <end position="77"/>
    </location>
</feature>
<feature type="region of interest" description="Disordered" evidence="2">
    <location>
        <begin position="1"/>
        <end position="25"/>
    </location>
</feature>
<organism>
    <name type="scientific">Salmonella choleraesuis (strain SC-B67)</name>
    <dbReference type="NCBI Taxonomy" id="321314"/>
    <lineage>
        <taxon>Bacteria</taxon>
        <taxon>Pseudomonadati</taxon>
        <taxon>Pseudomonadota</taxon>
        <taxon>Gammaproteobacteria</taxon>
        <taxon>Enterobacterales</taxon>
        <taxon>Enterobacteriaceae</taxon>
        <taxon>Salmonella</taxon>
    </lineage>
</organism>
<gene>
    <name evidence="1" type="primary">nanR</name>
    <name type="ordered locus">SCH_3278</name>
</gene>
<accession>Q57JC8</accession>
<proteinExistence type="inferred from homology"/>
<reference key="1">
    <citation type="journal article" date="2005" name="Nucleic Acids Res.">
        <title>The genome sequence of Salmonella enterica serovar Choleraesuis, a highly invasive and resistant zoonotic pathogen.</title>
        <authorList>
            <person name="Chiu C.-H."/>
            <person name="Tang P."/>
            <person name="Chu C."/>
            <person name="Hu S."/>
            <person name="Bao Q."/>
            <person name="Yu J."/>
            <person name="Chou Y.-Y."/>
            <person name="Wang H.-S."/>
            <person name="Lee Y.-S."/>
        </authorList>
    </citation>
    <scope>NUCLEOTIDE SEQUENCE [LARGE SCALE GENOMIC DNA]</scope>
    <source>
        <strain>SC-B67</strain>
    </source>
</reference>
<name>NANR_SALCH</name>